<comment type="function">
    <text evidence="1">Produces ATP from ADP in the presence of a proton gradient across the membrane. The catalytic sites are hosted primarily by the beta subunits.</text>
</comment>
<comment type="catalytic activity">
    <reaction evidence="1">
        <text>ATP + H2O + 4 H(+)(in) = ADP + phosphate + 5 H(+)(out)</text>
        <dbReference type="Rhea" id="RHEA:57720"/>
        <dbReference type="ChEBI" id="CHEBI:15377"/>
        <dbReference type="ChEBI" id="CHEBI:15378"/>
        <dbReference type="ChEBI" id="CHEBI:30616"/>
        <dbReference type="ChEBI" id="CHEBI:43474"/>
        <dbReference type="ChEBI" id="CHEBI:456216"/>
        <dbReference type="EC" id="7.1.2.2"/>
    </reaction>
</comment>
<comment type="subunit">
    <text evidence="1">F-type ATPases have 2 components, CF(1) - the catalytic core - and CF(0) - the membrane proton channel. CF(1) has five subunits: alpha(3), beta(3), gamma(1), delta(1), epsilon(1). CF(0) has three main subunits: a(1), b(2) and c(9-12). The alpha and beta chains form an alternating ring which encloses part of the gamma chain. CF(1) is attached to CF(0) by a central stalk formed by the gamma and epsilon chains, while a peripheral stalk is formed by the delta and b chains.</text>
</comment>
<comment type="subcellular location">
    <subcellularLocation>
        <location evidence="1">Cell inner membrane</location>
        <topology evidence="1">Peripheral membrane protein</topology>
    </subcellularLocation>
</comment>
<comment type="similarity">
    <text evidence="1">Belongs to the ATPase alpha/beta chains family.</text>
</comment>
<dbReference type="EC" id="7.1.2.2" evidence="1"/>
<dbReference type="EMBL" id="AE006470">
    <property type="protein sequence ID" value="AAM73450.1"/>
    <property type="molecule type" value="Genomic_DNA"/>
</dbReference>
<dbReference type="RefSeq" id="NP_663108.1">
    <property type="nucleotide sequence ID" value="NC_002932.3"/>
</dbReference>
<dbReference type="RefSeq" id="WP_010933887.1">
    <property type="nucleotide sequence ID" value="NC_002932.3"/>
</dbReference>
<dbReference type="SMR" id="Q8KAC9"/>
<dbReference type="STRING" id="194439.CT2234"/>
<dbReference type="EnsemblBacteria" id="AAM73450">
    <property type="protein sequence ID" value="AAM73450"/>
    <property type="gene ID" value="CT2234"/>
</dbReference>
<dbReference type="KEGG" id="cte:CT2234"/>
<dbReference type="PATRIC" id="fig|194439.7.peg.2027"/>
<dbReference type="eggNOG" id="COG0055">
    <property type="taxonomic scope" value="Bacteria"/>
</dbReference>
<dbReference type="HOGENOM" id="CLU_022398_0_2_10"/>
<dbReference type="OrthoDB" id="9801639at2"/>
<dbReference type="Proteomes" id="UP000001007">
    <property type="component" value="Chromosome"/>
</dbReference>
<dbReference type="GO" id="GO:0005886">
    <property type="term" value="C:plasma membrane"/>
    <property type="evidence" value="ECO:0007669"/>
    <property type="project" value="UniProtKB-SubCell"/>
</dbReference>
<dbReference type="GO" id="GO:0045259">
    <property type="term" value="C:proton-transporting ATP synthase complex"/>
    <property type="evidence" value="ECO:0007669"/>
    <property type="project" value="UniProtKB-KW"/>
</dbReference>
<dbReference type="GO" id="GO:0005524">
    <property type="term" value="F:ATP binding"/>
    <property type="evidence" value="ECO:0007669"/>
    <property type="project" value="UniProtKB-UniRule"/>
</dbReference>
<dbReference type="GO" id="GO:0016887">
    <property type="term" value="F:ATP hydrolysis activity"/>
    <property type="evidence" value="ECO:0007669"/>
    <property type="project" value="InterPro"/>
</dbReference>
<dbReference type="GO" id="GO:0046933">
    <property type="term" value="F:proton-transporting ATP synthase activity, rotational mechanism"/>
    <property type="evidence" value="ECO:0007669"/>
    <property type="project" value="UniProtKB-UniRule"/>
</dbReference>
<dbReference type="CDD" id="cd18110">
    <property type="entry name" value="ATP-synt_F1_beta_C"/>
    <property type="match status" value="1"/>
</dbReference>
<dbReference type="CDD" id="cd18115">
    <property type="entry name" value="ATP-synt_F1_beta_N"/>
    <property type="match status" value="1"/>
</dbReference>
<dbReference type="CDD" id="cd01133">
    <property type="entry name" value="F1-ATPase_beta_CD"/>
    <property type="match status" value="1"/>
</dbReference>
<dbReference type="FunFam" id="1.10.1140.10:FF:000001">
    <property type="entry name" value="ATP synthase subunit beta"/>
    <property type="match status" value="1"/>
</dbReference>
<dbReference type="FunFam" id="2.40.10.170:FF:000005">
    <property type="entry name" value="ATP synthase subunit beta"/>
    <property type="match status" value="1"/>
</dbReference>
<dbReference type="FunFam" id="3.40.50.300:FF:000026">
    <property type="entry name" value="ATP synthase subunit beta"/>
    <property type="match status" value="1"/>
</dbReference>
<dbReference type="Gene3D" id="2.40.10.170">
    <property type="match status" value="1"/>
</dbReference>
<dbReference type="Gene3D" id="1.10.1140.10">
    <property type="entry name" value="Bovine Mitochondrial F1-atpase, Atp Synthase Beta Chain, Chain D, domain 3"/>
    <property type="match status" value="1"/>
</dbReference>
<dbReference type="Gene3D" id="3.40.50.300">
    <property type="entry name" value="P-loop containing nucleotide triphosphate hydrolases"/>
    <property type="match status" value="1"/>
</dbReference>
<dbReference type="HAMAP" id="MF_01347">
    <property type="entry name" value="ATP_synth_beta_bact"/>
    <property type="match status" value="1"/>
</dbReference>
<dbReference type="InterPro" id="IPR003593">
    <property type="entry name" value="AAA+_ATPase"/>
</dbReference>
<dbReference type="InterPro" id="IPR055190">
    <property type="entry name" value="ATP-synt_VA_C"/>
</dbReference>
<dbReference type="InterPro" id="IPR005722">
    <property type="entry name" value="ATP_synth_F1_bsu"/>
</dbReference>
<dbReference type="InterPro" id="IPR020003">
    <property type="entry name" value="ATPase_a/bsu_AS"/>
</dbReference>
<dbReference type="InterPro" id="IPR050053">
    <property type="entry name" value="ATPase_alpha/beta_chains"/>
</dbReference>
<dbReference type="InterPro" id="IPR004100">
    <property type="entry name" value="ATPase_F1/V1/A1_a/bsu_N"/>
</dbReference>
<dbReference type="InterPro" id="IPR036121">
    <property type="entry name" value="ATPase_F1/V1/A1_a/bsu_N_sf"/>
</dbReference>
<dbReference type="InterPro" id="IPR000194">
    <property type="entry name" value="ATPase_F1/V1/A1_a/bsu_nucl-bd"/>
</dbReference>
<dbReference type="InterPro" id="IPR024034">
    <property type="entry name" value="ATPase_F1/V1_b/a_C"/>
</dbReference>
<dbReference type="InterPro" id="IPR027417">
    <property type="entry name" value="P-loop_NTPase"/>
</dbReference>
<dbReference type="NCBIfam" id="TIGR01039">
    <property type="entry name" value="atpD"/>
    <property type="match status" value="1"/>
</dbReference>
<dbReference type="PANTHER" id="PTHR15184">
    <property type="entry name" value="ATP SYNTHASE"/>
    <property type="match status" value="1"/>
</dbReference>
<dbReference type="PANTHER" id="PTHR15184:SF71">
    <property type="entry name" value="ATP SYNTHASE SUBUNIT BETA, MITOCHONDRIAL"/>
    <property type="match status" value="1"/>
</dbReference>
<dbReference type="Pfam" id="PF00006">
    <property type="entry name" value="ATP-synt_ab"/>
    <property type="match status" value="1"/>
</dbReference>
<dbReference type="Pfam" id="PF02874">
    <property type="entry name" value="ATP-synt_ab_N"/>
    <property type="match status" value="1"/>
</dbReference>
<dbReference type="Pfam" id="PF22919">
    <property type="entry name" value="ATP-synt_VA_C"/>
    <property type="match status" value="1"/>
</dbReference>
<dbReference type="PIRSF" id="PIRSF039072">
    <property type="entry name" value="ATPase_subunit_beta"/>
    <property type="match status" value="1"/>
</dbReference>
<dbReference type="SMART" id="SM00382">
    <property type="entry name" value="AAA"/>
    <property type="match status" value="1"/>
</dbReference>
<dbReference type="SUPFAM" id="SSF47917">
    <property type="entry name" value="C-terminal domain of alpha and beta subunits of F1 ATP synthase"/>
    <property type="match status" value="1"/>
</dbReference>
<dbReference type="SUPFAM" id="SSF50615">
    <property type="entry name" value="N-terminal domain of alpha and beta subunits of F1 ATP synthase"/>
    <property type="match status" value="1"/>
</dbReference>
<dbReference type="SUPFAM" id="SSF52540">
    <property type="entry name" value="P-loop containing nucleoside triphosphate hydrolases"/>
    <property type="match status" value="1"/>
</dbReference>
<dbReference type="PROSITE" id="PS00152">
    <property type="entry name" value="ATPASE_ALPHA_BETA"/>
    <property type="match status" value="1"/>
</dbReference>
<gene>
    <name evidence="1" type="primary">atpD2</name>
    <name type="ordered locus">CT2234</name>
</gene>
<organism>
    <name type="scientific">Chlorobaculum tepidum (strain ATCC 49652 / DSM 12025 / NBRC 103806 / TLS)</name>
    <name type="common">Chlorobium tepidum</name>
    <dbReference type="NCBI Taxonomy" id="194439"/>
    <lineage>
        <taxon>Bacteria</taxon>
        <taxon>Pseudomonadati</taxon>
        <taxon>Chlorobiota</taxon>
        <taxon>Chlorobiia</taxon>
        <taxon>Chlorobiales</taxon>
        <taxon>Chlorobiaceae</taxon>
        <taxon>Chlorobaculum</taxon>
    </lineage>
</organism>
<feature type="chain" id="PRO_0000144431" description="ATP synthase subunit beta 2">
    <location>
        <begin position="1"/>
        <end position="462"/>
    </location>
</feature>
<feature type="binding site" evidence="1">
    <location>
        <begin position="151"/>
        <end position="158"/>
    </location>
    <ligand>
        <name>ATP</name>
        <dbReference type="ChEBI" id="CHEBI:30616"/>
    </ligand>
</feature>
<accession>Q8KAC9</accession>
<keyword id="KW-0066">ATP synthesis</keyword>
<keyword id="KW-0067">ATP-binding</keyword>
<keyword id="KW-0997">Cell inner membrane</keyword>
<keyword id="KW-1003">Cell membrane</keyword>
<keyword id="KW-0139">CF(1)</keyword>
<keyword id="KW-0375">Hydrogen ion transport</keyword>
<keyword id="KW-0406">Ion transport</keyword>
<keyword id="KW-0472">Membrane</keyword>
<keyword id="KW-0547">Nucleotide-binding</keyword>
<keyword id="KW-1185">Reference proteome</keyword>
<keyword id="KW-1278">Translocase</keyword>
<keyword id="KW-0813">Transport</keyword>
<protein>
    <recommendedName>
        <fullName evidence="1">ATP synthase subunit beta 2</fullName>
        <ecNumber evidence="1">7.1.2.2</ecNumber>
    </recommendedName>
    <alternativeName>
        <fullName evidence="1">ATP synthase F1 sector subunit beta 2</fullName>
    </alternativeName>
    <alternativeName>
        <fullName evidence="1">F-ATPase subunit beta 2</fullName>
    </alternativeName>
</protein>
<sequence>MQEGKISQIIGPVVDVDFPEGQLPSILDALTVTRQDGSKLVLETQQHLGEERVRTIAMEGTDGLVRGMSAVNTGKPIQVPVGGEVLGRMLNVVGDPIDGKGPVPAKKTYSIHRAAPKFDELSTKTEMFETGIKVIDLLEPYSRGGKTGLFGGAGVGKTVLIMELINNIAKQQSGYSVFAGVGERTREGNDLWHEMMESGVIDKTALVFGQMNEPPGARARVALTGLSIAEYFREEEGRDVLLFIDNIFRFTQAGSEVSALLGRMPSAVGYQPTLSTEMGELQDRITSTKKGSVTSVQAIYVPADDLTDPAPATAFTHLDATTVLSRQIAELGIYPAVDPLDSTSRILDPNIVGDDHYNTAQAVKQILQRYKDLQDIIAILGMDELSDEDKLVVARARKVQRFLSQPFFVAEAFTGLAGKYVKLEDTIKGFKEIIDGRHDNLPEAAFYLVGTIEEAVAKAKTL</sequence>
<reference key="1">
    <citation type="journal article" date="2002" name="Proc. Natl. Acad. Sci. U.S.A.">
        <title>The complete genome sequence of Chlorobium tepidum TLS, a photosynthetic, anaerobic, green-sulfur bacterium.</title>
        <authorList>
            <person name="Eisen J.A."/>
            <person name="Nelson K.E."/>
            <person name="Paulsen I.T."/>
            <person name="Heidelberg J.F."/>
            <person name="Wu M."/>
            <person name="Dodson R.J."/>
            <person name="DeBoy R.T."/>
            <person name="Gwinn M.L."/>
            <person name="Nelson W.C."/>
            <person name="Haft D.H."/>
            <person name="Hickey E.K."/>
            <person name="Peterson J.D."/>
            <person name="Durkin A.S."/>
            <person name="Kolonay J.F."/>
            <person name="Yang F."/>
            <person name="Holt I.E."/>
            <person name="Umayam L.A."/>
            <person name="Mason T.M."/>
            <person name="Brenner M."/>
            <person name="Shea T.P."/>
            <person name="Parksey D.S."/>
            <person name="Nierman W.C."/>
            <person name="Feldblyum T.V."/>
            <person name="Hansen C.L."/>
            <person name="Craven M.B."/>
            <person name="Radune D."/>
            <person name="Vamathevan J.J."/>
            <person name="Khouri H.M."/>
            <person name="White O."/>
            <person name="Gruber T.M."/>
            <person name="Ketchum K.A."/>
            <person name="Venter J.C."/>
            <person name="Tettelin H."/>
            <person name="Bryant D.A."/>
            <person name="Fraser C.M."/>
        </authorList>
    </citation>
    <scope>NUCLEOTIDE SEQUENCE [LARGE SCALE GENOMIC DNA]</scope>
    <source>
        <strain>ATCC 49652 / DSM 12025 / NBRC 103806 / TLS</strain>
    </source>
</reference>
<name>ATPB2_CHLTE</name>
<evidence type="ECO:0000255" key="1">
    <source>
        <dbReference type="HAMAP-Rule" id="MF_01347"/>
    </source>
</evidence>
<proteinExistence type="inferred from homology"/>